<feature type="chain" id="PRO_1000085133" description="Chaperone protein DnaJ">
    <location>
        <begin position="1"/>
        <end position="376"/>
    </location>
</feature>
<feature type="domain" description="J" evidence="1">
    <location>
        <begin position="5"/>
        <end position="72"/>
    </location>
</feature>
<feature type="repeat" description="CXXCXGXG motif">
    <location>
        <begin position="149"/>
        <end position="156"/>
    </location>
</feature>
<feature type="repeat" description="CXXCXGXG motif">
    <location>
        <begin position="166"/>
        <end position="173"/>
    </location>
</feature>
<feature type="repeat" description="CXXCXGXG motif">
    <location>
        <begin position="188"/>
        <end position="195"/>
    </location>
</feature>
<feature type="repeat" description="CXXCXGXG motif">
    <location>
        <begin position="202"/>
        <end position="209"/>
    </location>
</feature>
<feature type="zinc finger region" description="CR-type" evidence="1">
    <location>
        <begin position="136"/>
        <end position="214"/>
    </location>
</feature>
<feature type="region of interest" description="Disordered" evidence="2">
    <location>
        <begin position="227"/>
        <end position="246"/>
    </location>
</feature>
<feature type="region of interest" description="Disordered" evidence="2">
    <location>
        <begin position="352"/>
        <end position="376"/>
    </location>
</feature>
<feature type="compositionally biased region" description="Gly residues" evidence="2">
    <location>
        <begin position="237"/>
        <end position="246"/>
    </location>
</feature>
<feature type="compositionally biased region" description="Basic and acidic residues" evidence="2">
    <location>
        <begin position="367"/>
        <end position="376"/>
    </location>
</feature>
<feature type="binding site" evidence="1">
    <location>
        <position position="149"/>
    </location>
    <ligand>
        <name>Zn(2+)</name>
        <dbReference type="ChEBI" id="CHEBI:29105"/>
        <label>1</label>
    </ligand>
</feature>
<feature type="binding site" evidence="1">
    <location>
        <position position="152"/>
    </location>
    <ligand>
        <name>Zn(2+)</name>
        <dbReference type="ChEBI" id="CHEBI:29105"/>
        <label>1</label>
    </ligand>
</feature>
<feature type="binding site" evidence="1">
    <location>
        <position position="166"/>
    </location>
    <ligand>
        <name>Zn(2+)</name>
        <dbReference type="ChEBI" id="CHEBI:29105"/>
        <label>2</label>
    </ligand>
</feature>
<feature type="binding site" evidence="1">
    <location>
        <position position="169"/>
    </location>
    <ligand>
        <name>Zn(2+)</name>
        <dbReference type="ChEBI" id="CHEBI:29105"/>
        <label>2</label>
    </ligand>
</feature>
<feature type="binding site" evidence="1">
    <location>
        <position position="188"/>
    </location>
    <ligand>
        <name>Zn(2+)</name>
        <dbReference type="ChEBI" id="CHEBI:29105"/>
        <label>2</label>
    </ligand>
</feature>
<feature type="binding site" evidence="1">
    <location>
        <position position="191"/>
    </location>
    <ligand>
        <name>Zn(2+)</name>
        <dbReference type="ChEBI" id="CHEBI:29105"/>
        <label>2</label>
    </ligand>
</feature>
<feature type="binding site" evidence="1">
    <location>
        <position position="202"/>
    </location>
    <ligand>
        <name>Zn(2+)</name>
        <dbReference type="ChEBI" id="CHEBI:29105"/>
        <label>1</label>
    </ligand>
</feature>
<feature type="binding site" evidence="1">
    <location>
        <position position="205"/>
    </location>
    <ligand>
        <name>Zn(2+)</name>
        <dbReference type="ChEBI" id="CHEBI:29105"/>
        <label>1</label>
    </ligand>
</feature>
<evidence type="ECO:0000255" key="1">
    <source>
        <dbReference type="HAMAP-Rule" id="MF_01152"/>
    </source>
</evidence>
<evidence type="ECO:0000256" key="2">
    <source>
        <dbReference type="SAM" id="MobiDB-lite"/>
    </source>
</evidence>
<sequence>MSKRDFYEVLGVPKNASDDEIKKAYRKLAMKYHPDRNQGDAAKPAEEKFKEAKEAYEILSDAQKRAAYDQYGHAGVDPNMRGGMGGAEGFGGFAEAFGDIFGDMFGGARGRGGRQVYRGNDLSYAMEITLEEAAKGKEAQIRIPSWESCETCHGSGAKPGTSAKTCGTCQGSGTVQMRQGFFSVQQTCPHCRGTGKIIPEPCTACHGQGRVKKQKTLEVKIPAGIDDGMRIRSTGNGEPGTNGGPPGDLYIEIRIKKHDIFERDGDDLHCQVPVSFITAALGGEIEVPTLQGKAAIDIPEGTQAGKQFRLRGKGIKGVRSSYPGDLYCHIIVETPVKLTEHQRKLLKELDESLKKGGAKHSPSTESWTDRLKSFFS</sequence>
<gene>
    <name evidence="1" type="primary">dnaJ</name>
    <name type="ordered locus">Ajs_3219</name>
</gene>
<organism>
    <name type="scientific">Acidovorax sp. (strain JS42)</name>
    <dbReference type="NCBI Taxonomy" id="232721"/>
    <lineage>
        <taxon>Bacteria</taxon>
        <taxon>Pseudomonadati</taxon>
        <taxon>Pseudomonadota</taxon>
        <taxon>Betaproteobacteria</taxon>
        <taxon>Burkholderiales</taxon>
        <taxon>Comamonadaceae</taxon>
        <taxon>Acidovorax</taxon>
    </lineage>
</organism>
<name>DNAJ_ACISJ</name>
<comment type="function">
    <text evidence="1">Participates actively in the response to hyperosmotic and heat shock by preventing the aggregation of stress-denatured proteins and by disaggregating proteins, also in an autonomous, DnaK-independent fashion. Unfolded proteins bind initially to DnaJ; upon interaction with the DnaJ-bound protein, DnaK hydrolyzes its bound ATP, resulting in the formation of a stable complex. GrpE releases ADP from DnaK; ATP binding to DnaK triggers the release of the substrate protein, thus completing the reaction cycle. Several rounds of ATP-dependent interactions between DnaJ, DnaK and GrpE are required for fully efficient folding. Also involved, together with DnaK and GrpE, in the DNA replication of plasmids through activation of initiation proteins.</text>
</comment>
<comment type="cofactor">
    <cofactor evidence="1">
        <name>Zn(2+)</name>
        <dbReference type="ChEBI" id="CHEBI:29105"/>
    </cofactor>
    <text evidence="1">Binds 2 Zn(2+) ions per monomer.</text>
</comment>
<comment type="subunit">
    <text evidence="1">Homodimer.</text>
</comment>
<comment type="subcellular location">
    <subcellularLocation>
        <location evidence="1">Cytoplasm</location>
    </subcellularLocation>
</comment>
<comment type="domain">
    <text evidence="1">The J domain is necessary and sufficient to stimulate DnaK ATPase activity. Zinc center 1 plays an important role in the autonomous, DnaK-independent chaperone activity of DnaJ. Zinc center 2 is essential for interaction with DnaK and for DnaJ activity.</text>
</comment>
<comment type="similarity">
    <text evidence="1">Belongs to the DnaJ family.</text>
</comment>
<dbReference type="EMBL" id="CP000539">
    <property type="protein sequence ID" value="ABM43342.1"/>
    <property type="molecule type" value="Genomic_DNA"/>
</dbReference>
<dbReference type="SMR" id="A1WAR7"/>
<dbReference type="STRING" id="232721.Ajs_3219"/>
<dbReference type="KEGG" id="ajs:Ajs_3219"/>
<dbReference type="eggNOG" id="COG0484">
    <property type="taxonomic scope" value="Bacteria"/>
</dbReference>
<dbReference type="HOGENOM" id="CLU_017633_0_7_4"/>
<dbReference type="Proteomes" id="UP000000645">
    <property type="component" value="Chromosome"/>
</dbReference>
<dbReference type="GO" id="GO:0005737">
    <property type="term" value="C:cytoplasm"/>
    <property type="evidence" value="ECO:0007669"/>
    <property type="project" value="UniProtKB-SubCell"/>
</dbReference>
<dbReference type="GO" id="GO:0005524">
    <property type="term" value="F:ATP binding"/>
    <property type="evidence" value="ECO:0007669"/>
    <property type="project" value="InterPro"/>
</dbReference>
<dbReference type="GO" id="GO:0031072">
    <property type="term" value="F:heat shock protein binding"/>
    <property type="evidence" value="ECO:0007669"/>
    <property type="project" value="InterPro"/>
</dbReference>
<dbReference type="GO" id="GO:0051082">
    <property type="term" value="F:unfolded protein binding"/>
    <property type="evidence" value="ECO:0007669"/>
    <property type="project" value="UniProtKB-UniRule"/>
</dbReference>
<dbReference type="GO" id="GO:0008270">
    <property type="term" value="F:zinc ion binding"/>
    <property type="evidence" value="ECO:0007669"/>
    <property type="project" value="UniProtKB-UniRule"/>
</dbReference>
<dbReference type="GO" id="GO:0051085">
    <property type="term" value="P:chaperone cofactor-dependent protein refolding"/>
    <property type="evidence" value="ECO:0007669"/>
    <property type="project" value="TreeGrafter"/>
</dbReference>
<dbReference type="GO" id="GO:0006260">
    <property type="term" value="P:DNA replication"/>
    <property type="evidence" value="ECO:0007669"/>
    <property type="project" value="UniProtKB-KW"/>
</dbReference>
<dbReference type="GO" id="GO:0042026">
    <property type="term" value="P:protein refolding"/>
    <property type="evidence" value="ECO:0007669"/>
    <property type="project" value="TreeGrafter"/>
</dbReference>
<dbReference type="GO" id="GO:0009408">
    <property type="term" value="P:response to heat"/>
    <property type="evidence" value="ECO:0007669"/>
    <property type="project" value="InterPro"/>
</dbReference>
<dbReference type="CDD" id="cd06257">
    <property type="entry name" value="DnaJ"/>
    <property type="match status" value="1"/>
</dbReference>
<dbReference type="CDD" id="cd10747">
    <property type="entry name" value="DnaJ_C"/>
    <property type="match status" value="1"/>
</dbReference>
<dbReference type="CDD" id="cd10719">
    <property type="entry name" value="DnaJ_zf"/>
    <property type="match status" value="1"/>
</dbReference>
<dbReference type="FunFam" id="1.10.287.110:FF:000031">
    <property type="entry name" value="Molecular chaperone DnaJ"/>
    <property type="match status" value="1"/>
</dbReference>
<dbReference type="FunFam" id="2.10.230.10:FF:000002">
    <property type="entry name" value="Molecular chaperone DnaJ"/>
    <property type="match status" value="1"/>
</dbReference>
<dbReference type="FunFam" id="2.60.260.20:FF:000004">
    <property type="entry name" value="Molecular chaperone DnaJ"/>
    <property type="match status" value="1"/>
</dbReference>
<dbReference type="Gene3D" id="1.10.287.110">
    <property type="entry name" value="DnaJ domain"/>
    <property type="match status" value="1"/>
</dbReference>
<dbReference type="Gene3D" id="2.10.230.10">
    <property type="entry name" value="Heat shock protein DnaJ, cysteine-rich domain"/>
    <property type="match status" value="1"/>
</dbReference>
<dbReference type="Gene3D" id="2.60.260.20">
    <property type="entry name" value="Urease metallochaperone UreE, N-terminal domain"/>
    <property type="match status" value="2"/>
</dbReference>
<dbReference type="HAMAP" id="MF_01152">
    <property type="entry name" value="DnaJ"/>
    <property type="match status" value="1"/>
</dbReference>
<dbReference type="InterPro" id="IPR012724">
    <property type="entry name" value="DnaJ"/>
</dbReference>
<dbReference type="InterPro" id="IPR002939">
    <property type="entry name" value="DnaJ_C"/>
</dbReference>
<dbReference type="InterPro" id="IPR001623">
    <property type="entry name" value="DnaJ_domain"/>
</dbReference>
<dbReference type="InterPro" id="IPR018253">
    <property type="entry name" value="DnaJ_domain_CS"/>
</dbReference>
<dbReference type="InterPro" id="IPR008971">
    <property type="entry name" value="HSP40/DnaJ_pept-bd"/>
</dbReference>
<dbReference type="InterPro" id="IPR001305">
    <property type="entry name" value="HSP_DnaJ_Cys-rich_dom"/>
</dbReference>
<dbReference type="InterPro" id="IPR036410">
    <property type="entry name" value="HSP_DnaJ_Cys-rich_dom_sf"/>
</dbReference>
<dbReference type="InterPro" id="IPR036869">
    <property type="entry name" value="J_dom_sf"/>
</dbReference>
<dbReference type="NCBIfam" id="TIGR02349">
    <property type="entry name" value="DnaJ_bact"/>
    <property type="match status" value="1"/>
</dbReference>
<dbReference type="NCBIfam" id="NF008035">
    <property type="entry name" value="PRK10767.1"/>
    <property type="match status" value="1"/>
</dbReference>
<dbReference type="PANTHER" id="PTHR43096:SF48">
    <property type="entry name" value="CHAPERONE PROTEIN DNAJ"/>
    <property type="match status" value="1"/>
</dbReference>
<dbReference type="PANTHER" id="PTHR43096">
    <property type="entry name" value="DNAJ HOMOLOG 1, MITOCHONDRIAL-RELATED"/>
    <property type="match status" value="1"/>
</dbReference>
<dbReference type="Pfam" id="PF00226">
    <property type="entry name" value="DnaJ"/>
    <property type="match status" value="1"/>
</dbReference>
<dbReference type="Pfam" id="PF01556">
    <property type="entry name" value="DnaJ_C"/>
    <property type="match status" value="1"/>
</dbReference>
<dbReference type="Pfam" id="PF00684">
    <property type="entry name" value="DnaJ_CXXCXGXG"/>
    <property type="match status" value="1"/>
</dbReference>
<dbReference type="PRINTS" id="PR00625">
    <property type="entry name" value="JDOMAIN"/>
</dbReference>
<dbReference type="SMART" id="SM00271">
    <property type="entry name" value="DnaJ"/>
    <property type="match status" value="1"/>
</dbReference>
<dbReference type="SUPFAM" id="SSF46565">
    <property type="entry name" value="Chaperone J-domain"/>
    <property type="match status" value="1"/>
</dbReference>
<dbReference type="SUPFAM" id="SSF57938">
    <property type="entry name" value="DnaJ/Hsp40 cysteine-rich domain"/>
    <property type="match status" value="1"/>
</dbReference>
<dbReference type="SUPFAM" id="SSF49493">
    <property type="entry name" value="HSP40/DnaJ peptide-binding domain"/>
    <property type="match status" value="2"/>
</dbReference>
<dbReference type="PROSITE" id="PS00636">
    <property type="entry name" value="DNAJ_1"/>
    <property type="match status" value="1"/>
</dbReference>
<dbReference type="PROSITE" id="PS50076">
    <property type="entry name" value="DNAJ_2"/>
    <property type="match status" value="1"/>
</dbReference>
<dbReference type="PROSITE" id="PS51188">
    <property type="entry name" value="ZF_CR"/>
    <property type="match status" value="1"/>
</dbReference>
<keyword id="KW-0143">Chaperone</keyword>
<keyword id="KW-0963">Cytoplasm</keyword>
<keyword id="KW-0235">DNA replication</keyword>
<keyword id="KW-0479">Metal-binding</keyword>
<keyword id="KW-0677">Repeat</keyword>
<keyword id="KW-0346">Stress response</keyword>
<keyword id="KW-0862">Zinc</keyword>
<keyword id="KW-0863">Zinc-finger</keyword>
<proteinExistence type="inferred from homology"/>
<protein>
    <recommendedName>
        <fullName evidence="1">Chaperone protein DnaJ</fullName>
    </recommendedName>
</protein>
<accession>A1WAR7</accession>
<reference key="1">
    <citation type="submission" date="2006-12" db="EMBL/GenBank/DDBJ databases">
        <title>Complete sequence of chromosome 1 of Acidovorax sp. JS42.</title>
        <authorList>
            <person name="Copeland A."/>
            <person name="Lucas S."/>
            <person name="Lapidus A."/>
            <person name="Barry K."/>
            <person name="Detter J.C."/>
            <person name="Glavina del Rio T."/>
            <person name="Dalin E."/>
            <person name="Tice H."/>
            <person name="Pitluck S."/>
            <person name="Chertkov O."/>
            <person name="Brettin T."/>
            <person name="Bruce D."/>
            <person name="Han C."/>
            <person name="Tapia R."/>
            <person name="Gilna P."/>
            <person name="Schmutz J."/>
            <person name="Larimer F."/>
            <person name="Land M."/>
            <person name="Hauser L."/>
            <person name="Kyrpides N."/>
            <person name="Kim E."/>
            <person name="Stahl D."/>
            <person name="Richardson P."/>
        </authorList>
    </citation>
    <scope>NUCLEOTIDE SEQUENCE [LARGE SCALE GENOMIC DNA]</scope>
    <source>
        <strain>JS42</strain>
    </source>
</reference>